<reference key="1">
    <citation type="journal article" date="1999" name="Nature">
        <title>Evidence for lateral gene transfer between Archaea and Bacteria from genome sequence of Thermotoga maritima.</title>
        <authorList>
            <person name="Nelson K.E."/>
            <person name="Clayton R.A."/>
            <person name="Gill S.R."/>
            <person name="Gwinn M.L."/>
            <person name="Dodson R.J."/>
            <person name="Haft D.H."/>
            <person name="Hickey E.K."/>
            <person name="Peterson J.D."/>
            <person name="Nelson W.C."/>
            <person name="Ketchum K.A."/>
            <person name="McDonald L.A."/>
            <person name="Utterback T.R."/>
            <person name="Malek J.A."/>
            <person name="Linher K.D."/>
            <person name="Garrett M.M."/>
            <person name="Stewart A.M."/>
            <person name="Cotton M.D."/>
            <person name="Pratt M.S."/>
            <person name="Phillips C.A."/>
            <person name="Richardson D.L."/>
            <person name="Heidelberg J.F."/>
            <person name="Sutton G.G."/>
            <person name="Fleischmann R.D."/>
            <person name="Eisen J.A."/>
            <person name="White O."/>
            <person name="Salzberg S.L."/>
            <person name="Smith H.O."/>
            <person name="Venter J.C."/>
            <person name="Fraser C.M."/>
        </authorList>
    </citation>
    <scope>NUCLEOTIDE SEQUENCE [LARGE SCALE GENOMIC DNA]</scope>
    <source>
        <strain>ATCC 43589 / DSM 3109 / JCM 10099 / NBRC 100826 / MSB8</strain>
    </source>
</reference>
<sequence>MRIVVNLKPEEIPKHWYNVLADLPFKLDPPLDPETKQPISPEKLSVIFPMSLIEQEVSEERFIEIPEPVLKEYAVYRPTPLIRATFLEEYLQTPARIYYKYEGVSPTGSHKPNTAIAQAYYNKIEGVKRLVTETGAGQWGSALSYAGAKFGLEVKVFMVKVSYQQKPMRKYMMNLFGGKVTPSPSEETNFGRKILSEDPDNPGSLGIAISEALEVAVSDPNTKYSLGSVLNHVLLHQTVIGLEIKKQLELIGEKPDILLGCHGGGSNFGGTILPFVPDKLSGRDIRFVACEPAACPSLTKGNYDYDFGDTAGLTPLLKMYTLGKDFIPPKIHAGGLRYHGSAPIIARLVKEGLVEAQAFDQDETFEAAKIFAKLEGIIPAPESAHAIAGAIREAKKAKEEGKERVIVFTLSGHGLLDLTAYV</sequence>
<gene>
    <name type="primary">trpB2</name>
    <name type="ordered locus">TM_0539</name>
</gene>
<comment type="function">
    <text evidence="1">The beta subunit is responsible for the synthesis of L-tryptophan from indole and L-serine.</text>
</comment>
<comment type="catalytic activity">
    <reaction>
        <text>(1S,2R)-1-C-(indol-3-yl)glycerol 3-phosphate + L-serine = D-glyceraldehyde 3-phosphate + L-tryptophan + H2O</text>
        <dbReference type="Rhea" id="RHEA:10532"/>
        <dbReference type="ChEBI" id="CHEBI:15377"/>
        <dbReference type="ChEBI" id="CHEBI:33384"/>
        <dbReference type="ChEBI" id="CHEBI:57912"/>
        <dbReference type="ChEBI" id="CHEBI:58866"/>
        <dbReference type="ChEBI" id="CHEBI:59776"/>
        <dbReference type="EC" id="4.2.1.20"/>
    </reaction>
</comment>
<comment type="cofactor">
    <cofactor evidence="1">
        <name>pyridoxal 5'-phosphate</name>
        <dbReference type="ChEBI" id="CHEBI:597326"/>
    </cofactor>
</comment>
<comment type="pathway">
    <text>Amino-acid biosynthesis; L-tryptophan biosynthesis; L-tryptophan from chorismate: step 5/5.</text>
</comment>
<comment type="subunit">
    <text evidence="1">Tetramer of two alpha and two beta chains.</text>
</comment>
<comment type="similarity">
    <text evidence="2">Belongs to the TrpB family.</text>
</comment>
<evidence type="ECO:0000250" key="1"/>
<evidence type="ECO:0000305" key="2"/>
<protein>
    <recommendedName>
        <fullName>Tryptophan synthase beta chain 2</fullName>
        <ecNumber>4.2.1.20</ecNumber>
    </recommendedName>
</protein>
<accession>Q9WZ09</accession>
<name>TRPB2_THEMA</name>
<proteinExistence type="inferred from homology"/>
<keyword id="KW-0028">Amino-acid biosynthesis</keyword>
<keyword id="KW-0057">Aromatic amino acid biosynthesis</keyword>
<keyword id="KW-0456">Lyase</keyword>
<keyword id="KW-0663">Pyridoxal phosphate</keyword>
<keyword id="KW-1185">Reference proteome</keyword>
<keyword id="KW-0822">Tryptophan biosynthesis</keyword>
<dbReference type="EC" id="4.2.1.20"/>
<dbReference type="EMBL" id="AE000512">
    <property type="protein sequence ID" value="AAD35624.1"/>
    <property type="molecule type" value="Genomic_DNA"/>
</dbReference>
<dbReference type="PIR" id="H72363">
    <property type="entry name" value="H72363"/>
</dbReference>
<dbReference type="RefSeq" id="NP_228349.1">
    <property type="nucleotide sequence ID" value="NC_000853.1"/>
</dbReference>
<dbReference type="RefSeq" id="WP_004081366.1">
    <property type="nucleotide sequence ID" value="NC_000853.1"/>
</dbReference>
<dbReference type="SMR" id="Q9WZ09"/>
<dbReference type="STRING" id="243274.TM_0539"/>
<dbReference type="PaxDb" id="243274-THEMA_01980"/>
<dbReference type="EnsemblBacteria" id="AAD35624">
    <property type="protein sequence ID" value="AAD35624"/>
    <property type="gene ID" value="TM_0539"/>
</dbReference>
<dbReference type="KEGG" id="tma:TM0539"/>
<dbReference type="KEGG" id="tmi:THEMA_01980"/>
<dbReference type="KEGG" id="tmm:Tmari_0536"/>
<dbReference type="KEGG" id="tmw:THMA_0552"/>
<dbReference type="eggNOG" id="COG1350">
    <property type="taxonomic scope" value="Bacteria"/>
</dbReference>
<dbReference type="InParanoid" id="Q9WZ09"/>
<dbReference type="OrthoDB" id="9766131at2"/>
<dbReference type="BioCyc" id="MetaCyc:MONOMER-3543"/>
<dbReference type="SABIO-RK" id="Q9WZ09"/>
<dbReference type="UniPathway" id="UPA00035">
    <property type="reaction ID" value="UER00044"/>
</dbReference>
<dbReference type="Proteomes" id="UP000008183">
    <property type="component" value="Chromosome"/>
</dbReference>
<dbReference type="GO" id="GO:0052684">
    <property type="term" value="F:L-serine hydro-lyase (adding indole, L-tryptophan-forming) activity"/>
    <property type="evidence" value="ECO:0000318"/>
    <property type="project" value="GO_Central"/>
</dbReference>
<dbReference type="GO" id="GO:0030170">
    <property type="term" value="F:pyridoxal phosphate binding"/>
    <property type="evidence" value="ECO:0007669"/>
    <property type="project" value="InterPro"/>
</dbReference>
<dbReference type="GO" id="GO:0004834">
    <property type="term" value="F:tryptophan synthase activity"/>
    <property type="evidence" value="ECO:0007669"/>
    <property type="project" value="UniProtKB-UniRule"/>
</dbReference>
<dbReference type="GO" id="GO:0000162">
    <property type="term" value="P:L-tryptophan biosynthetic process"/>
    <property type="evidence" value="ECO:0000318"/>
    <property type="project" value="GO_Central"/>
</dbReference>
<dbReference type="CDD" id="cd06446">
    <property type="entry name" value="Trp-synth_B"/>
    <property type="match status" value="1"/>
</dbReference>
<dbReference type="Gene3D" id="3.40.50.1100">
    <property type="match status" value="2"/>
</dbReference>
<dbReference type="HAMAP" id="MF_00133">
    <property type="entry name" value="Trp_synth_beta"/>
    <property type="match status" value="1"/>
</dbReference>
<dbReference type="InterPro" id="IPR006316">
    <property type="entry name" value="Trp_synth_b-like"/>
</dbReference>
<dbReference type="InterPro" id="IPR006653">
    <property type="entry name" value="Trp_synth_b_CS"/>
</dbReference>
<dbReference type="InterPro" id="IPR006654">
    <property type="entry name" value="Trp_synth_beta"/>
</dbReference>
<dbReference type="InterPro" id="IPR023026">
    <property type="entry name" value="Trp_synth_beta/beta-like"/>
</dbReference>
<dbReference type="InterPro" id="IPR001926">
    <property type="entry name" value="TrpB-like_PALP"/>
</dbReference>
<dbReference type="InterPro" id="IPR036052">
    <property type="entry name" value="TrpB-like_PALP_sf"/>
</dbReference>
<dbReference type="NCBIfam" id="NF009057">
    <property type="entry name" value="PRK12391.1"/>
    <property type="match status" value="1"/>
</dbReference>
<dbReference type="NCBIfam" id="TIGR01415">
    <property type="entry name" value="trpB_rel"/>
    <property type="match status" value="1"/>
</dbReference>
<dbReference type="PANTHER" id="PTHR48077:SF6">
    <property type="entry name" value="TRYPTOPHAN SYNTHASE"/>
    <property type="match status" value="1"/>
</dbReference>
<dbReference type="PANTHER" id="PTHR48077">
    <property type="entry name" value="TRYPTOPHAN SYNTHASE-RELATED"/>
    <property type="match status" value="1"/>
</dbReference>
<dbReference type="Pfam" id="PF00291">
    <property type="entry name" value="PALP"/>
    <property type="match status" value="1"/>
</dbReference>
<dbReference type="PIRSF" id="PIRSF001413">
    <property type="entry name" value="Trp_syn_beta"/>
    <property type="match status" value="1"/>
</dbReference>
<dbReference type="PIRSF" id="PIRSF500824">
    <property type="entry name" value="TrpB_prok"/>
    <property type="match status" value="1"/>
</dbReference>
<dbReference type="SUPFAM" id="SSF53686">
    <property type="entry name" value="Tryptophan synthase beta subunit-like PLP-dependent enzymes"/>
    <property type="match status" value="1"/>
</dbReference>
<dbReference type="PROSITE" id="PS00168">
    <property type="entry name" value="TRP_SYNTHASE_BETA"/>
    <property type="match status" value="1"/>
</dbReference>
<feature type="chain" id="PRO_0000099014" description="Tryptophan synthase beta chain 2">
    <location>
        <begin position="1"/>
        <end position="422"/>
    </location>
</feature>
<feature type="modified residue" description="N6-(pyridoxal phosphate)lysine" evidence="1">
    <location>
        <position position="111"/>
    </location>
</feature>
<organism>
    <name type="scientific">Thermotoga maritima (strain ATCC 43589 / DSM 3109 / JCM 10099 / NBRC 100826 / MSB8)</name>
    <dbReference type="NCBI Taxonomy" id="243274"/>
    <lineage>
        <taxon>Bacteria</taxon>
        <taxon>Thermotogati</taxon>
        <taxon>Thermotogota</taxon>
        <taxon>Thermotogae</taxon>
        <taxon>Thermotogales</taxon>
        <taxon>Thermotogaceae</taxon>
        <taxon>Thermotoga</taxon>
    </lineage>
</organism>